<proteinExistence type="inferred from homology"/>
<protein>
    <recommendedName>
        <fullName evidence="1">Chaperone protein HtpG</fullName>
    </recommendedName>
    <alternativeName>
        <fullName evidence="1">Heat shock protein HtpG</fullName>
    </alternativeName>
    <alternativeName>
        <fullName evidence="1">High temperature protein G</fullName>
    </alternativeName>
</protein>
<sequence length="623" mass="72451">MEKREFKAESKRLLDIVINSIYTNREIFLRELISNASDAIDKVYYKTLGDSSLTFNKDDYYIKIKPNKEERTLTISDKGIGMTEKELDENLGVIAKSGSLQFKKENEIKDGFDIIGQFGVGFYSGFLVADKITVITKAFGADKAYKWESDGVDGYTISEAEKDSFGTDIILHLKANDEDENYDEFLEEYKLKSLIKKYSDFIRYPIKLDVTKSRVKEGTENEHEEYVEEETVNSMVPLWRRNKNELTDDDYNNFYVEKRFGFDKPLRHMHISVDGMISYNSILYIPENIPYDYYTKEYEKGLELYSNGVLIMEKCSELLPDYFGFVKGIVDSQDLSLNISREMLQHDRQLSRIAKNIKTKIKNELESMMKNDRESYEKFYKSFGRQLKYGVYDDFGMNKDELKDLLMFYSSKEKKMVSLAEYVERMAEDQKYIYYAVGESNERIEKMPQTEMVLDKGYEILYFTEDVDEFAIKMLMNYKEKEFKSVSSGDLGIESEEENKKENEENKGIFEAMKEALGEKISAVKASSRLKNYPVCLSSEGEVSIEMEKILSAMPNNQGVKAQKVLEVNTNHEVFNSLKDALENDKDKFNLYTKLLYNQALLVEGLSIENPVDFTNDICKLMK</sequence>
<keyword id="KW-0067">ATP-binding</keyword>
<keyword id="KW-0143">Chaperone</keyword>
<keyword id="KW-0963">Cytoplasm</keyword>
<keyword id="KW-0547">Nucleotide-binding</keyword>
<keyword id="KW-1185">Reference proteome</keyword>
<keyword id="KW-0346">Stress response</keyword>
<comment type="function">
    <text evidence="1">Molecular chaperone. Has ATPase activity.</text>
</comment>
<comment type="subunit">
    <text evidence="1">Homodimer.</text>
</comment>
<comment type="subcellular location">
    <subcellularLocation>
        <location evidence="1">Cytoplasm</location>
    </subcellularLocation>
</comment>
<comment type="similarity">
    <text evidence="1">Belongs to the heat shock protein 90 family.</text>
</comment>
<organism>
    <name type="scientific">Clostridium perfringens (strain 13 / Type A)</name>
    <dbReference type="NCBI Taxonomy" id="195102"/>
    <lineage>
        <taxon>Bacteria</taxon>
        <taxon>Bacillati</taxon>
        <taxon>Bacillota</taxon>
        <taxon>Clostridia</taxon>
        <taxon>Eubacteriales</taxon>
        <taxon>Clostridiaceae</taxon>
        <taxon>Clostridium</taxon>
    </lineage>
</organism>
<gene>
    <name evidence="1" type="primary">htpG</name>
    <name type="ordered locus">CPE0416</name>
</gene>
<evidence type="ECO:0000255" key="1">
    <source>
        <dbReference type="HAMAP-Rule" id="MF_00505"/>
    </source>
</evidence>
<accession>Q8XNC2</accession>
<name>HTPG_CLOPE</name>
<feature type="chain" id="PRO_0000062982" description="Chaperone protein HtpG">
    <location>
        <begin position="1"/>
        <end position="623"/>
    </location>
</feature>
<feature type="region of interest" description="A; substrate-binding" evidence="1">
    <location>
        <begin position="1"/>
        <end position="341"/>
    </location>
</feature>
<feature type="region of interest" description="B" evidence="1">
    <location>
        <begin position="342"/>
        <end position="549"/>
    </location>
</feature>
<feature type="region of interest" description="C" evidence="1">
    <location>
        <begin position="550"/>
        <end position="623"/>
    </location>
</feature>
<dbReference type="EMBL" id="BA000016">
    <property type="protein sequence ID" value="BAB80122.1"/>
    <property type="molecule type" value="Genomic_DNA"/>
</dbReference>
<dbReference type="RefSeq" id="WP_011009794.1">
    <property type="nucleotide sequence ID" value="NC_003366.1"/>
</dbReference>
<dbReference type="SMR" id="Q8XNC2"/>
<dbReference type="STRING" id="195102.gene:10489672"/>
<dbReference type="KEGG" id="cpe:CPE0416"/>
<dbReference type="HOGENOM" id="CLU_006684_3_0_9"/>
<dbReference type="Proteomes" id="UP000000818">
    <property type="component" value="Chromosome"/>
</dbReference>
<dbReference type="GO" id="GO:0005737">
    <property type="term" value="C:cytoplasm"/>
    <property type="evidence" value="ECO:0007669"/>
    <property type="project" value="UniProtKB-SubCell"/>
</dbReference>
<dbReference type="GO" id="GO:0005524">
    <property type="term" value="F:ATP binding"/>
    <property type="evidence" value="ECO:0007669"/>
    <property type="project" value="UniProtKB-UniRule"/>
</dbReference>
<dbReference type="GO" id="GO:0016887">
    <property type="term" value="F:ATP hydrolysis activity"/>
    <property type="evidence" value="ECO:0007669"/>
    <property type="project" value="InterPro"/>
</dbReference>
<dbReference type="GO" id="GO:0140662">
    <property type="term" value="F:ATP-dependent protein folding chaperone"/>
    <property type="evidence" value="ECO:0007669"/>
    <property type="project" value="InterPro"/>
</dbReference>
<dbReference type="GO" id="GO:0051082">
    <property type="term" value="F:unfolded protein binding"/>
    <property type="evidence" value="ECO:0007669"/>
    <property type="project" value="UniProtKB-UniRule"/>
</dbReference>
<dbReference type="CDD" id="cd16927">
    <property type="entry name" value="HATPase_Hsp90-like"/>
    <property type="match status" value="1"/>
</dbReference>
<dbReference type="FunFam" id="3.40.50.11260:FF:000008">
    <property type="entry name" value="Chaperone protein HtpG"/>
    <property type="match status" value="1"/>
</dbReference>
<dbReference type="FunFam" id="3.30.565.10:FF:000357">
    <property type="entry name" value="Heat shock protein HSP 90-beta"/>
    <property type="match status" value="1"/>
</dbReference>
<dbReference type="FunFam" id="3.30.230.80:FF:000002">
    <property type="entry name" value="Molecular chaperone HtpG"/>
    <property type="match status" value="1"/>
</dbReference>
<dbReference type="Gene3D" id="3.30.230.80">
    <property type="match status" value="1"/>
</dbReference>
<dbReference type="Gene3D" id="3.40.50.11260">
    <property type="match status" value="1"/>
</dbReference>
<dbReference type="Gene3D" id="1.20.120.790">
    <property type="entry name" value="Heat shock protein 90, C-terminal domain"/>
    <property type="match status" value="1"/>
</dbReference>
<dbReference type="Gene3D" id="3.30.565.10">
    <property type="entry name" value="Histidine kinase-like ATPase, C-terminal domain"/>
    <property type="match status" value="1"/>
</dbReference>
<dbReference type="HAMAP" id="MF_00505">
    <property type="entry name" value="HSP90"/>
    <property type="match status" value="1"/>
</dbReference>
<dbReference type="InterPro" id="IPR036890">
    <property type="entry name" value="HATPase_C_sf"/>
</dbReference>
<dbReference type="InterPro" id="IPR019805">
    <property type="entry name" value="Heat_shock_protein_90_CS"/>
</dbReference>
<dbReference type="InterPro" id="IPR037196">
    <property type="entry name" value="HSP90_C"/>
</dbReference>
<dbReference type="InterPro" id="IPR001404">
    <property type="entry name" value="Hsp90_fam"/>
</dbReference>
<dbReference type="InterPro" id="IPR020575">
    <property type="entry name" value="Hsp90_N"/>
</dbReference>
<dbReference type="InterPro" id="IPR020568">
    <property type="entry name" value="Ribosomal_Su5_D2-typ_SF"/>
</dbReference>
<dbReference type="NCBIfam" id="NF003555">
    <property type="entry name" value="PRK05218.1"/>
    <property type="match status" value="1"/>
</dbReference>
<dbReference type="PANTHER" id="PTHR11528">
    <property type="entry name" value="HEAT SHOCK PROTEIN 90 FAMILY MEMBER"/>
    <property type="match status" value="1"/>
</dbReference>
<dbReference type="Pfam" id="PF13589">
    <property type="entry name" value="HATPase_c_3"/>
    <property type="match status" value="1"/>
</dbReference>
<dbReference type="Pfam" id="PF00183">
    <property type="entry name" value="HSP90"/>
    <property type="match status" value="2"/>
</dbReference>
<dbReference type="PIRSF" id="PIRSF002583">
    <property type="entry name" value="Hsp90"/>
    <property type="match status" value="1"/>
</dbReference>
<dbReference type="PRINTS" id="PR00775">
    <property type="entry name" value="HEATSHOCK90"/>
</dbReference>
<dbReference type="SUPFAM" id="SSF55874">
    <property type="entry name" value="ATPase domain of HSP90 chaperone/DNA topoisomerase II/histidine kinase"/>
    <property type="match status" value="1"/>
</dbReference>
<dbReference type="SUPFAM" id="SSF110942">
    <property type="entry name" value="HSP90 C-terminal domain"/>
    <property type="match status" value="1"/>
</dbReference>
<dbReference type="SUPFAM" id="SSF54211">
    <property type="entry name" value="Ribosomal protein S5 domain 2-like"/>
    <property type="match status" value="1"/>
</dbReference>
<dbReference type="PROSITE" id="PS00298">
    <property type="entry name" value="HSP90"/>
    <property type="match status" value="1"/>
</dbReference>
<reference key="1">
    <citation type="journal article" date="2002" name="Proc. Natl. Acad. Sci. U.S.A.">
        <title>Complete genome sequence of Clostridium perfringens, an anaerobic flesh-eater.</title>
        <authorList>
            <person name="Shimizu T."/>
            <person name="Ohtani K."/>
            <person name="Hirakawa H."/>
            <person name="Ohshima K."/>
            <person name="Yamashita A."/>
            <person name="Shiba T."/>
            <person name="Ogasawara N."/>
            <person name="Hattori M."/>
            <person name="Kuhara S."/>
            <person name="Hayashi H."/>
        </authorList>
    </citation>
    <scope>NUCLEOTIDE SEQUENCE [LARGE SCALE GENOMIC DNA]</scope>
    <source>
        <strain>13 / Type A</strain>
    </source>
</reference>